<dbReference type="EMBL" id="CP000653">
    <property type="protein sequence ID" value="ABP62532.1"/>
    <property type="molecule type" value="Genomic_DNA"/>
</dbReference>
<dbReference type="RefSeq" id="WP_015960837.1">
    <property type="nucleotide sequence ID" value="NC_009436.1"/>
</dbReference>
<dbReference type="SMR" id="A4WFQ2"/>
<dbReference type="STRING" id="399742.Ent638_3877"/>
<dbReference type="KEGG" id="ent:Ent638_3877"/>
<dbReference type="eggNOG" id="COG0425">
    <property type="taxonomic scope" value="Bacteria"/>
</dbReference>
<dbReference type="HOGENOM" id="CLU_165255_5_0_6"/>
<dbReference type="OrthoDB" id="9797352at2"/>
<dbReference type="Proteomes" id="UP000000230">
    <property type="component" value="Chromosome"/>
</dbReference>
<dbReference type="GO" id="GO:0005737">
    <property type="term" value="C:cytoplasm"/>
    <property type="evidence" value="ECO:0007669"/>
    <property type="project" value="UniProtKB-SubCell"/>
</dbReference>
<dbReference type="GO" id="GO:0097163">
    <property type="term" value="F:sulfur carrier activity"/>
    <property type="evidence" value="ECO:0007669"/>
    <property type="project" value="UniProtKB-UniRule"/>
</dbReference>
<dbReference type="GO" id="GO:0002143">
    <property type="term" value="P:tRNA wobble position uridine thiolation"/>
    <property type="evidence" value="ECO:0007669"/>
    <property type="project" value="InterPro"/>
</dbReference>
<dbReference type="CDD" id="cd03423">
    <property type="entry name" value="SirA"/>
    <property type="match status" value="1"/>
</dbReference>
<dbReference type="Gene3D" id="3.30.110.40">
    <property type="entry name" value="TusA-like domain"/>
    <property type="match status" value="1"/>
</dbReference>
<dbReference type="HAMAP" id="MF_00413">
    <property type="entry name" value="Thiourid_synth_A"/>
    <property type="match status" value="1"/>
</dbReference>
<dbReference type="InterPro" id="IPR022931">
    <property type="entry name" value="Sulphur_carrier_TusA"/>
</dbReference>
<dbReference type="InterPro" id="IPR001455">
    <property type="entry name" value="TusA-like"/>
</dbReference>
<dbReference type="InterPro" id="IPR036868">
    <property type="entry name" value="TusA-like_sf"/>
</dbReference>
<dbReference type="NCBIfam" id="NF001423">
    <property type="entry name" value="PRK00299.1"/>
    <property type="match status" value="1"/>
</dbReference>
<dbReference type="PANTHER" id="PTHR33279:SF2">
    <property type="entry name" value="SULFUR CARRIER PROTEIN TUSA"/>
    <property type="match status" value="1"/>
</dbReference>
<dbReference type="PANTHER" id="PTHR33279">
    <property type="entry name" value="SULFUR CARRIER PROTEIN YEDF-RELATED"/>
    <property type="match status" value="1"/>
</dbReference>
<dbReference type="Pfam" id="PF01206">
    <property type="entry name" value="TusA"/>
    <property type="match status" value="1"/>
</dbReference>
<dbReference type="SUPFAM" id="SSF64307">
    <property type="entry name" value="SirA-like"/>
    <property type="match status" value="1"/>
</dbReference>
<dbReference type="PROSITE" id="PS01148">
    <property type="entry name" value="UPF0033"/>
    <property type="match status" value="1"/>
</dbReference>
<proteinExistence type="inferred from homology"/>
<protein>
    <recommendedName>
        <fullName evidence="1">Sulfur carrier protein TusA</fullName>
    </recommendedName>
    <alternativeName>
        <fullName evidence="1">Sulfur mediator TusA</fullName>
    </alternativeName>
    <alternativeName>
        <fullName evidence="1">Sulfur transfer protein TusA</fullName>
    </alternativeName>
    <alternativeName>
        <fullName evidence="1">tRNA 2-thiouridine synthesizing protein A</fullName>
    </alternativeName>
</protein>
<evidence type="ECO:0000255" key="1">
    <source>
        <dbReference type="HAMAP-Rule" id="MF_00413"/>
    </source>
</evidence>
<feature type="chain" id="PRO_1000060061" description="Sulfur carrier protein TusA">
    <location>
        <begin position="1"/>
        <end position="81"/>
    </location>
</feature>
<feature type="active site" description="Cysteine persulfide intermediate" evidence="1">
    <location>
        <position position="19"/>
    </location>
</feature>
<keyword id="KW-0963">Cytoplasm</keyword>
<keyword id="KW-0819">tRNA processing</keyword>
<organism>
    <name type="scientific">Enterobacter sp. (strain 638)</name>
    <dbReference type="NCBI Taxonomy" id="399742"/>
    <lineage>
        <taxon>Bacteria</taxon>
        <taxon>Pseudomonadati</taxon>
        <taxon>Pseudomonadota</taxon>
        <taxon>Gammaproteobacteria</taxon>
        <taxon>Enterobacterales</taxon>
        <taxon>Enterobacteriaceae</taxon>
        <taxon>Enterobacter</taxon>
    </lineage>
</organism>
<sequence length="81" mass="9171">MTDLFSTPDHTLDAQGLRCPEPVMMVRKTVRTMQTGETLLIIADDPATTRDIPGFCTFMEHELIAQETEALPYRYLLRKGA</sequence>
<reference key="1">
    <citation type="journal article" date="2010" name="PLoS Genet.">
        <title>Genome sequence of the plant growth promoting endophytic bacterium Enterobacter sp. 638.</title>
        <authorList>
            <person name="Taghavi S."/>
            <person name="van der Lelie D."/>
            <person name="Hoffman A."/>
            <person name="Zhang Y.B."/>
            <person name="Walla M.D."/>
            <person name="Vangronsveld J."/>
            <person name="Newman L."/>
            <person name="Monchy S."/>
        </authorList>
    </citation>
    <scope>NUCLEOTIDE SEQUENCE [LARGE SCALE GENOMIC DNA]</scope>
    <source>
        <strain>638</strain>
    </source>
</reference>
<accession>A4WFQ2</accession>
<name>TUSA_ENT38</name>
<comment type="function">
    <text evidence="1">Sulfur carrier protein involved in sulfur trafficking in the cell. Part of a sulfur-relay system required for 2-thiolation during synthesis of 2-thiouridine of the modified wobble base 5-methylaminomethyl-2-thiouridine (mnm(5)s(2)U) in tRNA. Interacts with IscS and stimulates its cysteine desulfurase activity. Accepts an activated sulfur from IscS, which is then transferred to TusD, and thus determines the direction of sulfur flow from IscS to 2-thiouridine formation. Also appears to be involved in sulfur transfer for the biosynthesis of molybdopterin.</text>
</comment>
<comment type="pathway">
    <text evidence="1">tRNA modification.</text>
</comment>
<comment type="subunit">
    <text evidence="1">Interacts with IscS.</text>
</comment>
<comment type="subcellular location">
    <subcellularLocation>
        <location evidence="1">Cytoplasm</location>
    </subcellularLocation>
</comment>
<comment type="similarity">
    <text evidence="1">Belongs to the sulfur carrier protein TusA family.</text>
</comment>
<gene>
    <name evidence="1" type="primary">tusA</name>
    <name type="ordered locus">Ent638_3877</name>
</gene>